<gene>
    <name evidence="1" type="primary">queA</name>
    <name type="ordered locus">SAHV_1627</name>
</gene>
<organism>
    <name type="scientific">Staphylococcus aureus (strain Mu3 / ATCC 700698)</name>
    <dbReference type="NCBI Taxonomy" id="418127"/>
    <lineage>
        <taxon>Bacteria</taxon>
        <taxon>Bacillati</taxon>
        <taxon>Bacillota</taxon>
        <taxon>Bacilli</taxon>
        <taxon>Bacillales</taxon>
        <taxon>Staphylococcaceae</taxon>
        <taxon>Staphylococcus</taxon>
    </lineage>
</organism>
<accession>A7X356</accession>
<dbReference type="EC" id="2.4.99.17" evidence="1"/>
<dbReference type="EMBL" id="AP009324">
    <property type="protein sequence ID" value="BAF78510.1"/>
    <property type="molecule type" value="Genomic_DNA"/>
</dbReference>
<dbReference type="RefSeq" id="WP_001019178.1">
    <property type="nucleotide sequence ID" value="NC_009782.1"/>
</dbReference>
<dbReference type="SMR" id="A7X356"/>
<dbReference type="KEGG" id="saw:SAHV_1627"/>
<dbReference type="HOGENOM" id="CLU_039110_1_0_9"/>
<dbReference type="UniPathway" id="UPA00392"/>
<dbReference type="GO" id="GO:0005737">
    <property type="term" value="C:cytoplasm"/>
    <property type="evidence" value="ECO:0007669"/>
    <property type="project" value="UniProtKB-SubCell"/>
</dbReference>
<dbReference type="GO" id="GO:0051075">
    <property type="term" value="F:S-adenosylmethionine:tRNA ribosyltransferase-isomerase activity"/>
    <property type="evidence" value="ECO:0007669"/>
    <property type="project" value="UniProtKB-EC"/>
</dbReference>
<dbReference type="GO" id="GO:0008616">
    <property type="term" value="P:queuosine biosynthetic process"/>
    <property type="evidence" value="ECO:0007669"/>
    <property type="project" value="UniProtKB-UniRule"/>
</dbReference>
<dbReference type="GO" id="GO:0002099">
    <property type="term" value="P:tRNA wobble guanine modification"/>
    <property type="evidence" value="ECO:0007669"/>
    <property type="project" value="TreeGrafter"/>
</dbReference>
<dbReference type="FunFam" id="2.40.10.240:FF:000002">
    <property type="entry name" value="S-adenosylmethionine:tRNA ribosyltransferase-isomerase"/>
    <property type="match status" value="1"/>
</dbReference>
<dbReference type="FunFam" id="3.40.1780.10:FF:000001">
    <property type="entry name" value="S-adenosylmethionine:tRNA ribosyltransferase-isomerase"/>
    <property type="match status" value="1"/>
</dbReference>
<dbReference type="Gene3D" id="2.40.10.240">
    <property type="entry name" value="QueA-like"/>
    <property type="match status" value="1"/>
</dbReference>
<dbReference type="Gene3D" id="3.40.1780.10">
    <property type="entry name" value="QueA-like"/>
    <property type="match status" value="1"/>
</dbReference>
<dbReference type="HAMAP" id="MF_00113">
    <property type="entry name" value="QueA"/>
    <property type="match status" value="1"/>
</dbReference>
<dbReference type="InterPro" id="IPR003699">
    <property type="entry name" value="QueA"/>
</dbReference>
<dbReference type="InterPro" id="IPR042118">
    <property type="entry name" value="QueA_dom1"/>
</dbReference>
<dbReference type="InterPro" id="IPR042119">
    <property type="entry name" value="QueA_dom2"/>
</dbReference>
<dbReference type="InterPro" id="IPR036100">
    <property type="entry name" value="QueA_sf"/>
</dbReference>
<dbReference type="NCBIfam" id="NF001140">
    <property type="entry name" value="PRK00147.1"/>
    <property type="match status" value="1"/>
</dbReference>
<dbReference type="NCBIfam" id="TIGR00113">
    <property type="entry name" value="queA"/>
    <property type="match status" value="1"/>
</dbReference>
<dbReference type="PANTHER" id="PTHR30307">
    <property type="entry name" value="S-ADENOSYLMETHIONINE:TRNA RIBOSYLTRANSFERASE-ISOMERASE"/>
    <property type="match status" value="1"/>
</dbReference>
<dbReference type="PANTHER" id="PTHR30307:SF0">
    <property type="entry name" value="S-ADENOSYLMETHIONINE:TRNA RIBOSYLTRANSFERASE-ISOMERASE"/>
    <property type="match status" value="1"/>
</dbReference>
<dbReference type="Pfam" id="PF02547">
    <property type="entry name" value="Queuosine_synth"/>
    <property type="match status" value="1"/>
</dbReference>
<dbReference type="SUPFAM" id="SSF111337">
    <property type="entry name" value="QueA-like"/>
    <property type="match status" value="1"/>
</dbReference>
<reference key="1">
    <citation type="journal article" date="2008" name="Antimicrob. Agents Chemother.">
        <title>Mutated response regulator graR is responsible for phenotypic conversion of Staphylococcus aureus from heterogeneous vancomycin-intermediate resistance to vancomycin-intermediate resistance.</title>
        <authorList>
            <person name="Neoh H.-M."/>
            <person name="Cui L."/>
            <person name="Yuzawa H."/>
            <person name="Takeuchi F."/>
            <person name="Matsuo M."/>
            <person name="Hiramatsu K."/>
        </authorList>
    </citation>
    <scope>NUCLEOTIDE SEQUENCE [LARGE SCALE GENOMIC DNA]</scope>
    <source>
        <strain>Mu3 / ATCC 700698</strain>
    </source>
</reference>
<sequence>MNIEEFDYDLPESLIAQTPLKDRDHSRLLVMDRETGEMKHLHFKDIIEYFRPGDTLVLNDTRVMPARLFGLKEETGAKVEMLMLTQIEGNDWEVLLKPAKRIKVGNKLNFGNGKIIAECIKEMDQGGRIMRLHYEGILQERLDELGEMPLPPYIKERLDDPDRYQTVYAKESGSAAAPTAGLHFTDELLTEIKNKGVNIAFVTLHVGLGTFRPVSVDDVNDHEMHSEYYQMTQETADLLNDTKSKGHRIISVGTTSTRTLETIRRDHDKFVETSGWTNIFIYPGFDFKAIDGQITNFHLPKSTLVMLVSAFSTRENVLNAYKTAVNLEYRFFSFGDAMLII</sequence>
<keyword id="KW-0963">Cytoplasm</keyword>
<keyword id="KW-0671">Queuosine biosynthesis</keyword>
<keyword id="KW-0949">S-adenosyl-L-methionine</keyword>
<keyword id="KW-0808">Transferase</keyword>
<evidence type="ECO:0000255" key="1">
    <source>
        <dbReference type="HAMAP-Rule" id="MF_00113"/>
    </source>
</evidence>
<proteinExistence type="inferred from homology"/>
<protein>
    <recommendedName>
        <fullName evidence="1">S-adenosylmethionine:tRNA ribosyltransferase-isomerase</fullName>
        <ecNumber evidence="1">2.4.99.17</ecNumber>
    </recommendedName>
    <alternativeName>
        <fullName evidence="1">Queuosine biosynthesis protein QueA</fullName>
    </alternativeName>
</protein>
<comment type="function">
    <text evidence="1">Transfers and isomerizes the ribose moiety from AdoMet to the 7-aminomethyl group of 7-deazaguanine (preQ1-tRNA) to give epoxyqueuosine (oQ-tRNA).</text>
</comment>
<comment type="catalytic activity">
    <reaction evidence="1">
        <text>7-aminomethyl-7-carbaguanosine(34) in tRNA + S-adenosyl-L-methionine = epoxyqueuosine(34) in tRNA + adenine + L-methionine + 2 H(+)</text>
        <dbReference type="Rhea" id="RHEA:32155"/>
        <dbReference type="Rhea" id="RHEA-COMP:10342"/>
        <dbReference type="Rhea" id="RHEA-COMP:18582"/>
        <dbReference type="ChEBI" id="CHEBI:15378"/>
        <dbReference type="ChEBI" id="CHEBI:16708"/>
        <dbReference type="ChEBI" id="CHEBI:57844"/>
        <dbReference type="ChEBI" id="CHEBI:59789"/>
        <dbReference type="ChEBI" id="CHEBI:82833"/>
        <dbReference type="ChEBI" id="CHEBI:194443"/>
        <dbReference type="EC" id="2.4.99.17"/>
    </reaction>
</comment>
<comment type="pathway">
    <text evidence="1">tRNA modification; tRNA-queuosine biosynthesis.</text>
</comment>
<comment type="subunit">
    <text evidence="1">Monomer.</text>
</comment>
<comment type="subcellular location">
    <subcellularLocation>
        <location evidence="1">Cytoplasm</location>
    </subcellularLocation>
</comment>
<comment type="similarity">
    <text evidence="1">Belongs to the QueA family.</text>
</comment>
<name>QUEA_STAA1</name>
<feature type="chain" id="PRO_1000015285" description="S-adenosylmethionine:tRNA ribosyltransferase-isomerase">
    <location>
        <begin position="1"/>
        <end position="341"/>
    </location>
</feature>